<keyword id="KW-0963">Cytoplasm</keyword>
<keyword id="KW-0479">Metal-binding</keyword>
<keyword id="KW-1185">Reference proteome</keyword>
<keyword id="KW-0819">tRNA processing</keyword>
<keyword id="KW-0862">Zinc</keyword>
<proteinExistence type="inferred from homology"/>
<comment type="function">
    <text evidence="1 4 5">Non-catalytic subunit of the queuine tRNA-ribosyltransferase (TGT) that catalyzes the base-exchange of a guanine (G) residue with queuine (Q) at position 34 (anticodon wobble position) in tRNAs with GU(N) anticodons (tRNA-Asp, -Asn, -His and -Tyr), resulting in the hypermodified nucleoside queuosine (7-(((4,5-cis-dihydroxy-2-cyclopenten-1-yl)amino)methyl)-7-deazaguanosine).</text>
</comment>
<comment type="cofactor">
    <cofactor evidence="1">
        <name>Zn(2+)</name>
        <dbReference type="ChEBI" id="CHEBI:29105"/>
    </cofactor>
    <text evidence="1">Binds 1 zinc ion per subunit.</text>
</comment>
<comment type="subunit">
    <text evidence="1">Heterodimer of a catalytic subunit and an accessory subunit.</text>
</comment>
<comment type="subcellular location">
    <subcellularLocation>
        <location evidence="1 2">Cytoplasm</location>
    </subcellularLocation>
</comment>
<comment type="similarity">
    <text evidence="1">Belongs to the queuine tRNA-ribosyltransferase family. QTRT2 subfamily.</text>
</comment>
<comment type="sequence caution" evidence="3">
    <conflict type="erroneous gene model prediction"/>
</comment>
<name>QTRT2_SCHPO</name>
<feature type="chain" id="PRO_0000135570" description="Queuine tRNA-ribosyltransferase accessory subunit 2">
    <location>
        <begin position="1"/>
        <end position="441"/>
    </location>
</feature>
<feature type="binding site" evidence="1">
    <location>
        <position position="307"/>
    </location>
    <ligand>
        <name>Zn(2+)</name>
        <dbReference type="ChEBI" id="CHEBI:29105"/>
    </ligand>
</feature>
<feature type="binding site" evidence="1">
    <location>
        <position position="309"/>
    </location>
    <ligand>
        <name>Zn(2+)</name>
        <dbReference type="ChEBI" id="CHEBI:29105"/>
    </ligand>
</feature>
<feature type="binding site" evidence="1">
    <location>
        <position position="312"/>
    </location>
    <ligand>
        <name>Zn(2+)</name>
        <dbReference type="ChEBI" id="CHEBI:29105"/>
    </ligand>
</feature>
<feature type="binding site" evidence="1">
    <location>
        <position position="338"/>
    </location>
    <ligand>
        <name>Zn(2+)</name>
        <dbReference type="ChEBI" id="CHEBI:29105"/>
    </ligand>
</feature>
<dbReference type="EMBL" id="CU329670">
    <property type="protein sequence ID" value="CAK9838640.1"/>
    <property type="status" value="ALT_SEQ"/>
    <property type="molecule type" value="Genomic_DNA"/>
</dbReference>
<dbReference type="PIR" id="T38545">
    <property type="entry name" value="T38545"/>
</dbReference>
<dbReference type="SMR" id="O14096"/>
<dbReference type="FunCoup" id="O14096">
    <property type="interactions" value="535"/>
</dbReference>
<dbReference type="STRING" id="284812.O14096"/>
<dbReference type="iPTMnet" id="O14096"/>
<dbReference type="PaxDb" id="4896-SPAC2F3.13c.1"/>
<dbReference type="PomBase" id="SPAC2F3.13c"/>
<dbReference type="eggNOG" id="KOG3909">
    <property type="taxonomic scope" value="Eukaryota"/>
</dbReference>
<dbReference type="InParanoid" id="O14096"/>
<dbReference type="PRO" id="PR:O14096"/>
<dbReference type="Proteomes" id="UP000002485">
    <property type="component" value="Chromosome I"/>
</dbReference>
<dbReference type="GO" id="GO:0005737">
    <property type="term" value="C:cytoplasm"/>
    <property type="evidence" value="ECO:0007005"/>
    <property type="project" value="PomBase"/>
</dbReference>
<dbReference type="GO" id="GO:0046872">
    <property type="term" value="F:metal ion binding"/>
    <property type="evidence" value="ECO:0007669"/>
    <property type="project" value="UniProtKB-KW"/>
</dbReference>
<dbReference type="GO" id="GO:0008479">
    <property type="term" value="F:tRNA-guanosine(34) queuine transglycosylase activity"/>
    <property type="evidence" value="ECO:0007669"/>
    <property type="project" value="UniProtKB-UniRule"/>
</dbReference>
<dbReference type="GO" id="GO:1990145">
    <property type="term" value="P:maintenance of translational fidelity"/>
    <property type="evidence" value="ECO:0000269"/>
    <property type="project" value="PomBase"/>
</dbReference>
<dbReference type="GO" id="GO:0101030">
    <property type="term" value="P:tRNA-guanine transglycosylation"/>
    <property type="evidence" value="ECO:0007669"/>
    <property type="project" value="UniProtKB-ARBA"/>
</dbReference>
<dbReference type="Gene3D" id="3.20.20.105">
    <property type="entry name" value="Queuine tRNA-ribosyltransferase-like"/>
    <property type="match status" value="1"/>
</dbReference>
<dbReference type="HAMAP" id="MF_03043">
    <property type="entry name" value="QTRT2"/>
    <property type="match status" value="1"/>
</dbReference>
<dbReference type="InterPro" id="IPR028592">
    <property type="entry name" value="QTRTD1"/>
</dbReference>
<dbReference type="InterPro" id="IPR050852">
    <property type="entry name" value="Queuine_tRNA-ribosyltrfase"/>
</dbReference>
<dbReference type="InterPro" id="IPR036511">
    <property type="entry name" value="TGT-like_sf"/>
</dbReference>
<dbReference type="InterPro" id="IPR002616">
    <property type="entry name" value="tRNA_ribo_trans-like"/>
</dbReference>
<dbReference type="NCBIfam" id="TIGR00449">
    <property type="entry name" value="tgt_general"/>
    <property type="match status" value="1"/>
</dbReference>
<dbReference type="PANTHER" id="PTHR46064">
    <property type="entry name" value="QUEUINE TRNA-RIBOSYLTRANSFERASE ACCESSORY SUBUNIT 2"/>
    <property type="match status" value="1"/>
</dbReference>
<dbReference type="PANTHER" id="PTHR46064:SF1">
    <property type="entry name" value="QUEUINE TRNA-RIBOSYLTRANSFERASE ACCESSORY SUBUNIT 2"/>
    <property type="match status" value="1"/>
</dbReference>
<dbReference type="Pfam" id="PF01702">
    <property type="entry name" value="TGT"/>
    <property type="match status" value="1"/>
</dbReference>
<dbReference type="SUPFAM" id="SSF51713">
    <property type="entry name" value="tRNA-guanine transglycosylase"/>
    <property type="match status" value="1"/>
</dbReference>
<accession>O14096</accession>
<accession>A0AAN2H921</accession>
<sequence>MAISSLSSPSGARVSSVTVKNKVLKTPCFFLPTSRGTVPHLTPDNVEEFDIPALYVGLEDCLDRLEASPILTNEGTIKKWIAAPSVQPTLLAPRRTSPLPSVSAGQSHINIVTASGAKKLTNDLYIKAVLKLCPELVIPLNDTPTSPPGVKRKPKIVERSVNWTTELLLALKATDAFNTTKVFFPVPDLDTQYLTPIFQFFQENQLANNIAGLAFSNNVNPLPADLVGLPRLSIQKFESPLEILKCIQRGIDIIVPDMITQATDAGVALTFSFPPPSKDVLNSKIELGLDMWDERFATDMEPLQSGCVCKTCRRYKRAYVRHLLQARELVAWILLQLHNVYAFTAFFQGIRASIQEGNFDEDVRKFEEIYMTSFPASHGFGPRKRGYQMDLTNVQPVENKPAWISMKSPLEKEIANEYEALKVTERKEDTQDYNEPELHNR</sequence>
<gene>
    <name type="primary">qtr2</name>
    <name evidence="6" type="ORF">SPAC2F3.13c</name>
</gene>
<organism>
    <name type="scientific">Schizosaccharomyces pombe (strain 972 / ATCC 24843)</name>
    <name type="common">Fission yeast</name>
    <dbReference type="NCBI Taxonomy" id="284812"/>
    <lineage>
        <taxon>Eukaryota</taxon>
        <taxon>Fungi</taxon>
        <taxon>Dikarya</taxon>
        <taxon>Ascomycota</taxon>
        <taxon>Taphrinomycotina</taxon>
        <taxon>Schizosaccharomycetes</taxon>
        <taxon>Schizosaccharomycetales</taxon>
        <taxon>Schizosaccharomycetaceae</taxon>
        <taxon>Schizosaccharomyces</taxon>
    </lineage>
</organism>
<reference key="1">
    <citation type="journal article" date="2002" name="Nature">
        <title>The genome sequence of Schizosaccharomyces pombe.</title>
        <authorList>
            <person name="Wood V."/>
            <person name="Gwilliam R."/>
            <person name="Rajandream M.A."/>
            <person name="Lyne M.H."/>
            <person name="Lyne R."/>
            <person name="Stewart A."/>
            <person name="Sgouros J.G."/>
            <person name="Peat N."/>
            <person name="Hayles J."/>
            <person name="Baker S.G."/>
            <person name="Basham D."/>
            <person name="Bowman S."/>
            <person name="Brooks K."/>
            <person name="Brown D."/>
            <person name="Brown S."/>
            <person name="Chillingworth T."/>
            <person name="Churcher C.M."/>
            <person name="Collins M."/>
            <person name="Connor R."/>
            <person name="Cronin A."/>
            <person name="Davis P."/>
            <person name="Feltwell T."/>
            <person name="Fraser A."/>
            <person name="Gentles S."/>
            <person name="Goble A."/>
            <person name="Hamlin N."/>
            <person name="Harris D.E."/>
            <person name="Hidalgo J."/>
            <person name="Hodgson G."/>
            <person name="Holroyd S."/>
            <person name="Hornsby T."/>
            <person name="Howarth S."/>
            <person name="Huckle E.J."/>
            <person name="Hunt S."/>
            <person name="Jagels K."/>
            <person name="James K.D."/>
            <person name="Jones L."/>
            <person name="Jones M."/>
            <person name="Leather S."/>
            <person name="McDonald S."/>
            <person name="McLean J."/>
            <person name="Mooney P."/>
            <person name="Moule S."/>
            <person name="Mungall K.L."/>
            <person name="Murphy L.D."/>
            <person name="Niblett D."/>
            <person name="Odell C."/>
            <person name="Oliver K."/>
            <person name="O'Neil S."/>
            <person name="Pearson D."/>
            <person name="Quail M.A."/>
            <person name="Rabbinowitsch E."/>
            <person name="Rutherford K.M."/>
            <person name="Rutter S."/>
            <person name="Saunders D."/>
            <person name="Seeger K."/>
            <person name="Sharp S."/>
            <person name="Skelton J."/>
            <person name="Simmonds M.N."/>
            <person name="Squares R."/>
            <person name="Squares S."/>
            <person name="Stevens K."/>
            <person name="Taylor K."/>
            <person name="Taylor R.G."/>
            <person name="Tivey A."/>
            <person name="Walsh S.V."/>
            <person name="Warren T."/>
            <person name="Whitehead S."/>
            <person name="Woodward J.R."/>
            <person name="Volckaert G."/>
            <person name="Aert R."/>
            <person name="Robben J."/>
            <person name="Grymonprez B."/>
            <person name="Weltjens I."/>
            <person name="Vanstreels E."/>
            <person name="Rieger M."/>
            <person name="Schaefer M."/>
            <person name="Mueller-Auer S."/>
            <person name="Gabel C."/>
            <person name="Fuchs M."/>
            <person name="Duesterhoeft A."/>
            <person name="Fritzc C."/>
            <person name="Holzer E."/>
            <person name="Moestl D."/>
            <person name="Hilbert H."/>
            <person name="Borzym K."/>
            <person name="Langer I."/>
            <person name="Beck A."/>
            <person name="Lehrach H."/>
            <person name="Reinhardt R."/>
            <person name="Pohl T.M."/>
            <person name="Eger P."/>
            <person name="Zimmermann W."/>
            <person name="Wedler H."/>
            <person name="Wambutt R."/>
            <person name="Purnelle B."/>
            <person name="Goffeau A."/>
            <person name="Cadieu E."/>
            <person name="Dreano S."/>
            <person name="Gloux S."/>
            <person name="Lelaure V."/>
            <person name="Mottier S."/>
            <person name="Galibert F."/>
            <person name="Aves S.J."/>
            <person name="Xiang Z."/>
            <person name="Hunt C."/>
            <person name="Moore K."/>
            <person name="Hurst S.M."/>
            <person name="Lucas M."/>
            <person name="Rochet M."/>
            <person name="Gaillardin C."/>
            <person name="Tallada V.A."/>
            <person name="Garzon A."/>
            <person name="Thode G."/>
            <person name="Daga R.R."/>
            <person name="Cruzado L."/>
            <person name="Jimenez J."/>
            <person name="Sanchez M."/>
            <person name="del Rey F."/>
            <person name="Benito J."/>
            <person name="Dominguez A."/>
            <person name="Revuelta J.L."/>
            <person name="Moreno S."/>
            <person name="Armstrong J."/>
            <person name="Forsburg S.L."/>
            <person name="Cerutti L."/>
            <person name="Lowe T."/>
            <person name="McCombie W.R."/>
            <person name="Paulsen I."/>
            <person name="Potashkin J."/>
            <person name="Shpakovski G.V."/>
            <person name="Ussery D."/>
            <person name="Barrell B.G."/>
            <person name="Nurse P."/>
        </authorList>
    </citation>
    <scope>NUCLEOTIDE SEQUENCE [LARGE SCALE GENOMIC DNA]</scope>
    <source>
        <strain>972 / ATCC 24843</strain>
    </source>
</reference>
<reference key="2">
    <citation type="journal article" date="2011" name="Science">
        <title>Comparative functional genomics of the fission yeasts.</title>
        <authorList>
            <person name="Rhind N."/>
            <person name="Chen Z."/>
            <person name="Yassour M."/>
            <person name="Thompson D.A."/>
            <person name="Haas B.J."/>
            <person name="Habib N."/>
            <person name="Wapinski I."/>
            <person name="Roy S."/>
            <person name="Lin M.F."/>
            <person name="Heiman D.I."/>
            <person name="Young S.K."/>
            <person name="Furuya K."/>
            <person name="Guo Y."/>
            <person name="Pidoux A."/>
            <person name="Chen H.M."/>
            <person name="Robbertse B."/>
            <person name="Goldberg J.M."/>
            <person name="Aoki K."/>
            <person name="Bayne E.H."/>
            <person name="Berlin A.M."/>
            <person name="Desjardins C.A."/>
            <person name="Dobbs E."/>
            <person name="Dukaj L."/>
            <person name="Fan L."/>
            <person name="FitzGerald M.G."/>
            <person name="French C."/>
            <person name="Gujja S."/>
            <person name="Hansen K."/>
            <person name="Keifenheim D."/>
            <person name="Levin J.Z."/>
            <person name="Mosher R.A."/>
            <person name="Mueller C.A."/>
            <person name="Pfiffner J."/>
            <person name="Priest M."/>
            <person name="Russ C."/>
            <person name="Smialowska A."/>
            <person name="Swoboda P."/>
            <person name="Sykes S.M."/>
            <person name="Vaughn M."/>
            <person name="Vengrova S."/>
            <person name="Yoder R."/>
            <person name="Zeng Q."/>
            <person name="Allshire R."/>
            <person name="Baulcombe D."/>
            <person name="Birren B.W."/>
            <person name="Brown W."/>
            <person name="Ekwall K."/>
            <person name="Kellis M."/>
            <person name="Leatherwood J."/>
            <person name="Levin H."/>
            <person name="Margalit H."/>
            <person name="Martienssen R."/>
            <person name="Nieduszynski C.A."/>
            <person name="Spatafora J.W."/>
            <person name="Friedman N."/>
            <person name="Dalgaard J.Z."/>
            <person name="Baumann P."/>
            <person name="Niki H."/>
            <person name="Regev A."/>
            <person name="Nusbaum C."/>
        </authorList>
    </citation>
    <scope>REVISION OF GENE MODEL</scope>
</reference>
<reference key="3">
    <citation type="journal article" date="2006" name="Nat. Biotechnol.">
        <title>ORFeome cloning and global analysis of protein localization in the fission yeast Schizosaccharomyces pombe.</title>
        <authorList>
            <person name="Matsuyama A."/>
            <person name="Arai R."/>
            <person name="Yashiroda Y."/>
            <person name="Shirai A."/>
            <person name="Kamata A."/>
            <person name="Sekido S."/>
            <person name="Kobayashi Y."/>
            <person name="Hashimoto A."/>
            <person name="Hamamoto M."/>
            <person name="Hiraoka Y."/>
            <person name="Horinouchi S."/>
            <person name="Yoshida M."/>
        </authorList>
    </citation>
    <scope>SUBCELLULAR LOCATION [LARGE SCALE ANALYSIS]</scope>
</reference>
<reference key="4">
    <citation type="journal article" date="2015" name="Nucleic Acids Res.">
        <title>Dynamic modulation of Dnmt2-dependent tRNA methylation by the micronutrient queuine.</title>
        <authorList>
            <person name="Mueller M."/>
            <person name="Hartmann M."/>
            <person name="Schuster I."/>
            <person name="Bender S."/>
            <person name="Thuering K.L."/>
            <person name="Helm M."/>
            <person name="Katze J.R."/>
            <person name="Nellen W."/>
            <person name="Lyko F."/>
            <person name="Ehrenhofer-Murray A.E."/>
        </authorList>
    </citation>
    <scope>FUNCTION</scope>
</reference>
<reference key="5">
    <citation type="journal article" date="2019" name="Nucleic Acids Res.">
        <title>Queuine links translational control in eukaryotes to a micronutrient from bacteria.</title>
        <authorList>
            <person name="Mueller M."/>
            <person name="Legrand C."/>
            <person name="Tuorto F."/>
            <person name="Kelly V.P."/>
            <person name="Atlasi Y."/>
            <person name="Lyko F."/>
            <person name="Ehrenhofer-Murray A.E."/>
        </authorList>
    </citation>
    <scope>FUNCTION</scope>
</reference>
<evidence type="ECO:0000255" key="1">
    <source>
        <dbReference type="HAMAP-Rule" id="MF_03043"/>
    </source>
</evidence>
<evidence type="ECO:0000269" key="2">
    <source>
    </source>
</evidence>
<evidence type="ECO:0000305" key="3"/>
<evidence type="ECO:0000305" key="4">
    <source>
    </source>
</evidence>
<evidence type="ECO:0000305" key="5">
    <source>
    </source>
</evidence>
<evidence type="ECO:0000312" key="6">
    <source>
        <dbReference type="PomBase" id="SPAC2F3.13c"/>
    </source>
</evidence>
<protein>
    <recommendedName>
        <fullName evidence="1">Queuine tRNA-ribosyltransferase accessory subunit 2</fullName>
    </recommendedName>
    <alternativeName>
        <fullName evidence="1">Queuine tRNA-ribosyltransferase domain-containing protein 1</fullName>
    </alternativeName>
</protein>